<proteinExistence type="inferred from homology"/>
<evidence type="ECO:0000250" key="1"/>
<evidence type="ECO:0000269" key="2">
    <source>
    </source>
</evidence>
<evidence type="ECO:0000305" key="3"/>
<feature type="chain" id="PRO_0000116762" description="Conserved oligomeric Golgi complex subunit 5">
    <location>
        <begin position="1"/>
        <end position="411"/>
    </location>
</feature>
<accession>O42962</accession>
<name>COG5_SCHPO</name>
<dbReference type="EMBL" id="CU329671">
    <property type="protein sequence ID" value="CAA17068.1"/>
    <property type="molecule type" value="Genomic_DNA"/>
</dbReference>
<dbReference type="PIR" id="T39845">
    <property type="entry name" value="T39845"/>
</dbReference>
<dbReference type="RefSeq" id="NP_595980.1">
    <property type="nucleotide sequence ID" value="NM_001021887.2"/>
</dbReference>
<dbReference type="SMR" id="O42962"/>
<dbReference type="STRING" id="284812.O42962"/>
<dbReference type="PaxDb" id="4896-SPBC19G7.14c.1"/>
<dbReference type="EnsemblFungi" id="SPBC19G7.14c.1">
    <property type="protein sequence ID" value="SPBC19G7.14c.1:pep"/>
    <property type="gene ID" value="SPBC19G7.14c"/>
</dbReference>
<dbReference type="GeneID" id="2540782"/>
<dbReference type="KEGG" id="spo:2540782"/>
<dbReference type="PomBase" id="SPBC19G7.14c">
    <property type="gene designation" value="cog5"/>
</dbReference>
<dbReference type="VEuPathDB" id="FungiDB:SPBC19G7.14c"/>
<dbReference type="HOGENOM" id="CLU_669316_0_0_1"/>
<dbReference type="InParanoid" id="O42962"/>
<dbReference type="OMA" id="IWSKFED"/>
<dbReference type="PRO" id="PR:O42962"/>
<dbReference type="Proteomes" id="UP000002485">
    <property type="component" value="Chromosome II"/>
</dbReference>
<dbReference type="GO" id="GO:0005829">
    <property type="term" value="C:cytosol"/>
    <property type="evidence" value="ECO:0007005"/>
    <property type="project" value="PomBase"/>
</dbReference>
<dbReference type="GO" id="GO:0005794">
    <property type="term" value="C:Golgi apparatus"/>
    <property type="evidence" value="ECO:0007005"/>
    <property type="project" value="PomBase"/>
</dbReference>
<dbReference type="GO" id="GO:0000139">
    <property type="term" value="C:Golgi membrane"/>
    <property type="evidence" value="ECO:0007669"/>
    <property type="project" value="UniProtKB-SubCell"/>
</dbReference>
<dbReference type="GO" id="GO:0017119">
    <property type="term" value="C:Golgi transport complex"/>
    <property type="evidence" value="ECO:0000266"/>
    <property type="project" value="PomBase"/>
</dbReference>
<dbReference type="GO" id="GO:0006891">
    <property type="term" value="P:intra-Golgi vesicle-mediated transport"/>
    <property type="evidence" value="ECO:0000266"/>
    <property type="project" value="PomBase"/>
</dbReference>
<dbReference type="GO" id="GO:0006886">
    <property type="term" value="P:intracellular protein transport"/>
    <property type="evidence" value="ECO:0000305"/>
    <property type="project" value="PomBase"/>
</dbReference>
<dbReference type="InterPro" id="IPR019465">
    <property type="entry name" value="Cog5"/>
</dbReference>
<dbReference type="InterPro" id="IPR048485">
    <property type="entry name" value="COG5_helical"/>
</dbReference>
<dbReference type="InterPro" id="IPR049176">
    <property type="entry name" value="COG5_N"/>
</dbReference>
<dbReference type="PANTHER" id="PTHR13228">
    <property type="entry name" value="CONSERVED OLIGOMERIC GOLGI COMPLEX COMPONENT 5"/>
    <property type="match status" value="1"/>
</dbReference>
<dbReference type="PANTHER" id="PTHR13228:SF3">
    <property type="entry name" value="CONSERVED OLIGOMERIC GOLGI COMPLEX SUBUNIT 5"/>
    <property type="match status" value="1"/>
</dbReference>
<dbReference type="Pfam" id="PF20649">
    <property type="entry name" value="COG5_C"/>
    <property type="match status" value="1"/>
</dbReference>
<dbReference type="Pfam" id="PF10392">
    <property type="entry name" value="COG5_N"/>
    <property type="match status" value="1"/>
</dbReference>
<keyword id="KW-0963">Cytoplasm</keyword>
<keyword id="KW-0333">Golgi apparatus</keyword>
<keyword id="KW-0472">Membrane</keyword>
<keyword id="KW-0653">Protein transport</keyword>
<keyword id="KW-1185">Reference proteome</keyword>
<keyword id="KW-0813">Transport</keyword>
<comment type="function">
    <text evidence="1">Acts as essential component of the peripheral membrane COG complex that is involved in intra-Golgi protein trafficking. COG is located at the cis-Golgi, and regulates tethering of retrograde intra-Golgi vesicles and possibly a number of other membrane trafficking events (By similarity).</text>
</comment>
<comment type="subunit">
    <text evidence="1">Component of the conserved oligomeric Golgi (COG) complex which consists of eight different proteins cog1-cog8.</text>
</comment>
<comment type="subcellular location">
    <subcellularLocation>
        <location evidence="2">Cytoplasm</location>
    </subcellularLocation>
    <subcellularLocation>
        <location evidence="2">Golgi apparatus membrane</location>
        <topology evidence="2">Peripheral membrane protein</topology>
        <orientation evidence="2">Cytoplasmic side</orientation>
    </subcellularLocation>
</comment>
<comment type="similarity">
    <text evidence="3">Belongs to the COG5 family.</text>
</comment>
<sequence>MEFRYDFSDYKKSDFDPKAQAERVLISVHADSDVNEDKEVARKRLGYALKEVERQITDLIVHEETTLTKNVSSSLNAQSYLQDIEGKLEQLMLVYERIRSLVVIPSENLGPLHEAIVNLHSTYMTLYWLGEFFGIQAKLFPLFQGSINENEKLSRYYQASLLLQESDQLLSRFPLMKRQSSVSLLLKLNITNRSRIIKETSSYLLSQEDQLSFSVNSNGFTNACSVLYMLDKYLLEQDLTRLLSSRIQKAIIQFDSIFQLSPTTRRLLHNSTDPSAANSTIWSKFEDGWYQISKIGAQCVFWERSLQKANICNPDYPNLLEYFQMQPNFILDGATICIYFFKELAISISSKMQMLDRRDPILLRVFRSDFQRVTHIVEQAIARSSSEIVNKDTRECSIVMNSLRVLAPKNP</sequence>
<reference key="1">
    <citation type="journal article" date="2002" name="Nature">
        <title>The genome sequence of Schizosaccharomyces pombe.</title>
        <authorList>
            <person name="Wood V."/>
            <person name="Gwilliam R."/>
            <person name="Rajandream M.A."/>
            <person name="Lyne M.H."/>
            <person name="Lyne R."/>
            <person name="Stewart A."/>
            <person name="Sgouros J.G."/>
            <person name="Peat N."/>
            <person name="Hayles J."/>
            <person name="Baker S.G."/>
            <person name="Basham D."/>
            <person name="Bowman S."/>
            <person name="Brooks K."/>
            <person name="Brown D."/>
            <person name="Brown S."/>
            <person name="Chillingworth T."/>
            <person name="Churcher C.M."/>
            <person name="Collins M."/>
            <person name="Connor R."/>
            <person name="Cronin A."/>
            <person name="Davis P."/>
            <person name="Feltwell T."/>
            <person name="Fraser A."/>
            <person name="Gentles S."/>
            <person name="Goble A."/>
            <person name="Hamlin N."/>
            <person name="Harris D.E."/>
            <person name="Hidalgo J."/>
            <person name="Hodgson G."/>
            <person name="Holroyd S."/>
            <person name="Hornsby T."/>
            <person name="Howarth S."/>
            <person name="Huckle E.J."/>
            <person name="Hunt S."/>
            <person name="Jagels K."/>
            <person name="James K.D."/>
            <person name="Jones L."/>
            <person name="Jones M."/>
            <person name="Leather S."/>
            <person name="McDonald S."/>
            <person name="McLean J."/>
            <person name="Mooney P."/>
            <person name="Moule S."/>
            <person name="Mungall K.L."/>
            <person name="Murphy L.D."/>
            <person name="Niblett D."/>
            <person name="Odell C."/>
            <person name="Oliver K."/>
            <person name="O'Neil S."/>
            <person name="Pearson D."/>
            <person name="Quail M.A."/>
            <person name="Rabbinowitsch E."/>
            <person name="Rutherford K.M."/>
            <person name="Rutter S."/>
            <person name="Saunders D."/>
            <person name="Seeger K."/>
            <person name="Sharp S."/>
            <person name="Skelton J."/>
            <person name="Simmonds M.N."/>
            <person name="Squares R."/>
            <person name="Squares S."/>
            <person name="Stevens K."/>
            <person name="Taylor K."/>
            <person name="Taylor R.G."/>
            <person name="Tivey A."/>
            <person name="Walsh S.V."/>
            <person name="Warren T."/>
            <person name="Whitehead S."/>
            <person name="Woodward J.R."/>
            <person name="Volckaert G."/>
            <person name="Aert R."/>
            <person name="Robben J."/>
            <person name="Grymonprez B."/>
            <person name="Weltjens I."/>
            <person name="Vanstreels E."/>
            <person name="Rieger M."/>
            <person name="Schaefer M."/>
            <person name="Mueller-Auer S."/>
            <person name="Gabel C."/>
            <person name="Fuchs M."/>
            <person name="Duesterhoeft A."/>
            <person name="Fritzc C."/>
            <person name="Holzer E."/>
            <person name="Moestl D."/>
            <person name="Hilbert H."/>
            <person name="Borzym K."/>
            <person name="Langer I."/>
            <person name="Beck A."/>
            <person name="Lehrach H."/>
            <person name="Reinhardt R."/>
            <person name="Pohl T.M."/>
            <person name="Eger P."/>
            <person name="Zimmermann W."/>
            <person name="Wedler H."/>
            <person name="Wambutt R."/>
            <person name="Purnelle B."/>
            <person name="Goffeau A."/>
            <person name="Cadieu E."/>
            <person name="Dreano S."/>
            <person name="Gloux S."/>
            <person name="Lelaure V."/>
            <person name="Mottier S."/>
            <person name="Galibert F."/>
            <person name="Aves S.J."/>
            <person name="Xiang Z."/>
            <person name="Hunt C."/>
            <person name="Moore K."/>
            <person name="Hurst S.M."/>
            <person name="Lucas M."/>
            <person name="Rochet M."/>
            <person name="Gaillardin C."/>
            <person name="Tallada V.A."/>
            <person name="Garzon A."/>
            <person name="Thode G."/>
            <person name="Daga R.R."/>
            <person name="Cruzado L."/>
            <person name="Jimenez J."/>
            <person name="Sanchez M."/>
            <person name="del Rey F."/>
            <person name="Benito J."/>
            <person name="Dominguez A."/>
            <person name="Revuelta J.L."/>
            <person name="Moreno S."/>
            <person name="Armstrong J."/>
            <person name="Forsburg S.L."/>
            <person name="Cerutti L."/>
            <person name="Lowe T."/>
            <person name="McCombie W.R."/>
            <person name="Paulsen I."/>
            <person name="Potashkin J."/>
            <person name="Shpakovski G.V."/>
            <person name="Ussery D."/>
            <person name="Barrell B.G."/>
            <person name="Nurse P."/>
        </authorList>
    </citation>
    <scope>NUCLEOTIDE SEQUENCE [LARGE SCALE GENOMIC DNA]</scope>
    <source>
        <strain>972 / ATCC 24843</strain>
    </source>
</reference>
<reference key="2">
    <citation type="journal article" date="2006" name="Nat. Biotechnol.">
        <title>ORFeome cloning and global analysis of protein localization in the fission yeast Schizosaccharomyces pombe.</title>
        <authorList>
            <person name="Matsuyama A."/>
            <person name="Arai R."/>
            <person name="Yashiroda Y."/>
            <person name="Shirai A."/>
            <person name="Kamata A."/>
            <person name="Sekido S."/>
            <person name="Kobayashi Y."/>
            <person name="Hashimoto A."/>
            <person name="Hamamoto M."/>
            <person name="Hiraoka Y."/>
            <person name="Horinouchi S."/>
            <person name="Yoshida M."/>
        </authorList>
    </citation>
    <scope>SUBCELLULAR LOCATION [LARGE SCALE ANALYSIS]</scope>
</reference>
<gene>
    <name type="primary">cog5</name>
    <name type="ORF">SPBC19G7.14c</name>
</gene>
<organism>
    <name type="scientific">Schizosaccharomyces pombe (strain 972 / ATCC 24843)</name>
    <name type="common">Fission yeast</name>
    <dbReference type="NCBI Taxonomy" id="284812"/>
    <lineage>
        <taxon>Eukaryota</taxon>
        <taxon>Fungi</taxon>
        <taxon>Dikarya</taxon>
        <taxon>Ascomycota</taxon>
        <taxon>Taphrinomycotina</taxon>
        <taxon>Schizosaccharomycetes</taxon>
        <taxon>Schizosaccharomycetales</taxon>
        <taxon>Schizosaccharomycetaceae</taxon>
        <taxon>Schizosaccharomyces</taxon>
    </lineage>
</organism>
<protein>
    <recommendedName>
        <fullName>Conserved oligomeric Golgi complex subunit 5</fullName>
        <shortName>COG complex subunit 5</shortName>
    </recommendedName>
</protein>